<sequence length="90" mass="9509">MANSAQARKRARQAAKANSHNSALRSKFRTAIKAVRKAVDAGDQAKAAELFKAAVKTIDTIADKKIVHKNKAARSKSRLAAAVKGLQAAA</sequence>
<proteinExistence type="inferred from homology"/>
<reference key="1">
    <citation type="submission" date="2007-10" db="EMBL/GenBank/DDBJ databases">
        <title>Complete sequence of chromosome 1 of Burkholderia multivorans ATCC 17616.</title>
        <authorList>
            <person name="Copeland A."/>
            <person name="Lucas S."/>
            <person name="Lapidus A."/>
            <person name="Barry K."/>
            <person name="Glavina del Rio T."/>
            <person name="Dalin E."/>
            <person name="Tice H."/>
            <person name="Pitluck S."/>
            <person name="Chain P."/>
            <person name="Malfatti S."/>
            <person name="Shin M."/>
            <person name="Vergez L."/>
            <person name="Schmutz J."/>
            <person name="Larimer F."/>
            <person name="Land M."/>
            <person name="Hauser L."/>
            <person name="Kyrpides N."/>
            <person name="Kim E."/>
            <person name="Tiedje J."/>
            <person name="Richardson P."/>
        </authorList>
    </citation>
    <scope>NUCLEOTIDE SEQUENCE [LARGE SCALE GENOMIC DNA]</scope>
    <source>
        <strain>ATCC 17616 / 249</strain>
    </source>
</reference>
<reference key="2">
    <citation type="submission" date="2007-04" db="EMBL/GenBank/DDBJ databases">
        <title>Complete genome sequence of Burkholderia multivorans ATCC 17616.</title>
        <authorList>
            <person name="Ohtsubo Y."/>
            <person name="Yamashita A."/>
            <person name="Kurokawa K."/>
            <person name="Takami H."/>
            <person name="Yuhara S."/>
            <person name="Nishiyama E."/>
            <person name="Endo R."/>
            <person name="Miyazaki R."/>
            <person name="Ono A."/>
            <person name="Yano K."/>
            <person name="Ito M."/>
            <person name="Sota M."/>
            <person name="Yuji N."/>
            <person name="Hattori M."/>
            <person name="Tsuda M."/>
        </authorList>
    </citation>
    <scope>NUCLEOTIDE SEQUENCE [LARGE SCALE GENOMIC DNA]</scope>
    <source>
        <strain>ATCC 17616 / 249</strain>
    </source>
</reference>
<protein>
    <recommendedName>
        <fullName evidence="1">Small ribosomal subunit protein bS20</fullName>
    </recommendedName>
    <alternativeName>
        <fullName evidence="3">30S ribosomal protein S20</fullName>
    </alternativeName>
</protein>
<accession>A9AGJ8</accession>
<feature type="chain" id="PRO_1000126412" description="Small ribosomal subunit protein bS20">
    <location>
        <begin position="1"/>
        <end position="90"/>
    </location>
</feature>
<feature type="region of interest" description="Disordered" evidence="2">
    <location>
        <begin position="1"/>
        <end position="25"/>
    </location>
</feature>
<organism>
    <name type="scientific">Burkholderia multivorans (strain ATCC 17616 / 249)</name>
    <dbReference type="NCBI Taxonomy" id="395019"/>
    <lineage>
        <taxon>Bacteria</taxon>
        <taxon>Pseudomonadati</taxon>
        <taxon>Pseudomonadota</taxon>
        <taxon>Betaproteobacteria</taxon>
        <taxon>Burkholderiales</taxon>
        <taxon>Burkholderiaceae</taxon>
        <taxon>Burkholderia</taxon>
        <taxon>Burkholderia cepacia complex</taxon>
    </lineage>
</organism>
<evidence type="ECO:0000255" key="1">
    <source>
        <dbReference type="HAMAP-Rule" id="MF_00500"/>
    </source>
</evidence>
<evidence type="ECO:0000256" key="2">
    <source>
        <dbReference type="SAM" id="MobiDB-lite"/>
    </source>
</evidence>
<evidence type="ECO:0000305" key="3"/>
<keyword id="KW-1185">Reference proteome</keyword>
<keyword id="KW-0687">Ribonucleoprotein</keyword>
<keyword id="KW-0689">Ribosomal protein</keyword>
<keyword id="KW-0694">RNA-binding</keyword>
<keyword id="KW-0699">rRNA-binding</keyword>
<comment type="function">
    <text evidence="1">Binds directly to 16S ribosomal RNA.</text>
</comment>
<comment type="similarity">
    <text evidence="1">Belongs to the bacterial ribosomal protein bS20 family.</text>
</comment>
<name>RS20_BURM1</name>
<dbReference type="EMBL" id="CP000868">
    <property type="protein sequence ID" value="ABX14440.1"/>
    <property type="molecule type" value="Genomic_DNA"/>
</dbReference>
<dbReference type="EMBL" id="AP009385">
    <property type="protein sequence ID" value="BAG44406.1"/>
    <property type="molecule type" value="Genomic_DNA"/>
</dbReference>
<dbReference type="RefSeq" id="WP_006398494.1">
    <property type="nucleotide sequence ID" value="NC_010804.1"/>
</dbReference>
<dbReference type="SMR" id="A9AGJ8"/>
<dbReference type="STRING" id="395019.BMULJ_02515"/>
<dbReference type="GeneID" id="93169642"/>
<dbReference type="KEGG" id="bmj:BMULJ_02515"/>
<dbReference type="KEGG" id="bmu:Bmul_0745"/>
<dbReference type="eggNOG" id="COG0268">
    <property type="taxonomic scope" value="Bacteria"/>
</dbReference>
<dbReference type="HOGENOM" id="CLU_160655_4_0_4"/>
<dbReference type="Proteomes" id="UP000008815">
    <property type="component" value="Chromosome 1"/>
</dbReference>
<dbReference type="GO" id="GO:0005829">
    <property type="term" value="C:cytosol"/>
    <property type="evidence" value="ECO:0007669"/>
    <property type="project" value="TreeGrafter"/>
</dbReference>
<dbReference type="GO" id="GO:0015935">
    <property type="term" value="C:small ribosomal subunit"/>
    <property type="evidence" value="ECO:0007669"/>
    <property type="project" value="TreeGrafter"/>
</dbReference>
<dbReference type="GO" id="GO:0070181">
    <property type="term" value="F:small ribosomal subunit rRNA binding"/>
    <property type="evidence" value="ECO:0007669"/>
    <property type="project" value="TreeGrafter"/>
</dbReference>
<dbReference type="GO" id="GO:0003735">
    <property type="term" value="F:structural constituent of ribosome"/>
    <property type="evidence" value="ECO:0007669"/>
    <property type="project" value="InterPro"/>
</dbReference>
<dbReference type="GO" id="GO:0006412">
    <property type="term" value="P:translation"/>
    <property type="evidence" value="ECO:0007669"/>
    <property type="project" value="UniProtKB-UniRule"/>
</dbReference>
<dbReference type="FunFam" id="1.20.58.110:FF:000001">
    <property type="entry name" value="30S ribosomal protein S20"/>
    <property type="match status" value="1"/>
</dbReference>
<dbReference type="Gene3D" id="1.20.58.110">
    <property type="entry name" value="Ribosomal protein S20"/>
    <property type="match status" value="1"/>
</dbReference>
<dbReference type="HAMAP" id="MF_00500">
    <property type="entry name" value="Ribosomal_bS20"/>
    <property type="match status" value="1"/>
</dbReference>
<dbReference type="InterPro" id="IPR002583">
    <property type="entry name" value="Ribosomal_bS20"/>
</dbReference>
<dbReference type="InterPro" id="IPR036510">
    <property type="entry name" value="Ribosomal_bS20_sf"/>
</dbReference>
<dbReference type="NCBIfam" id="TIGR00029">
    <property type="entry name" value="S20"/>
    <property type="match status" value="1"/>
</dbReference>
<dbReference type="PANTHER" id="PTHR33398">
    <property type="entry name" value="30S RIBOSOMAL PROTEIN S20"/>
    <property type="match status" value="1"/>
</dbReference>
<dbReference type="PANTHER" id="PTHR33398:SF1">
    <property type="entry name" value="SMALL RIBOSOMAL SUBUNIT PROTEIN BS20C"/>
    <property type="match status" value="1"/>
</dbReference>
<dbReference type="Pfam" id="PF01649">
    <property type="entry name" value="Ribosomal_S20p"/>
    <property type="match status" value="1"/>
</dbReference>
<dbReference type="SUPFAM" id="SSF46992">
    <property type="entry name" value="Ribosomal protein S20"/>
    <property type="match status" value="1"/>
</dbReference>
<gene>
    <name evidence="1" type="primary">rpsT</name>
    <name type="ordered locus">Bmul_0745</name>
    <name type="ordered locus">BMULJ_02515</name>
</gene>